<proteinExistence type="evidence at protein level"/>
<comment type="function">
    <text evidence="6">Plays a role in the maintenance of the undifferentiated state of germ cells regulating the spermatogonia cell cycle and inducing a prolonged transit in G1 phase. Affects cell proliferation probably by repressing translation of specific mRNAs. Maintains the germ cell lineage by suppressing both Bax-dependent and -independent apoptotic pathways. Essential in the early stage embryo to protect the migrating primordial germ cells (PGCs) from apoptosis.</text>
</comment>
<comment type="subunit">
    <text evidence="1">Binds mRNA from germ cells. Interacts with PUM2 (By similarity).</text>
</comment>
<comment type="interaction">
    <interactant intactId="EBI-18012223">
        <id>P60323-2</id>
    </interactant>
    <interactant intactId="EBI-10292696">
        <id>Q96Q77</id>
        <label>CIB3</label>
    </interactant>
    <organismsDiffer>false</organismsDiffer>
    <experiments>3</experiments>
</comment>
<comment type="interaction">
    <interactant intactId="EBI-18012223">
        <id>P60323-2</id>
    </interactant>
    <interactant intactId="EBI-747481">
        <id>Q9NV31</id>
        <label>IMP3</label>
    </interactant>
    <organismsDiffer>false</organismsDiffer>
    <experiments>3</experiments>
</comment>
<comment type="interaction">
    <interactant intactId="EBI-18012223">
        <id>P60323-2</id>
    </interactant>
    <interactant intactId="EBI-744248">
        <id>P40692</id>
        <label>MLH1</label>
    </interactant>
    <organismsDiffer>false</organismsDiffer>
    <experiments>3</experiments>
</comment>
<comment type="interaction">
    <interactant intactId="EBI-18012223">
        <id>P60323-2</id>
    </interactant>
    <interactant intactId="EBI-372273">
        <id>P20618</id>
        <label>PSMB1</label>
    </interactant>
    <organismsDiffer>false</organismsDiffer>
    <experiments>3</experiments>
</comment>
<comment type="interaction">
    <interactant intactId="EBI-18012223">
        <id>P60323-2</id>
    </interactant>
    <interactant intactId="EBI-750487">
        <id>Q8WW24</id>
        <label>TEKT4</label>
    </interactant>
    <organismsDiffer>false</organismsDiffer>
    <experiments>3</experiments>
</comment>
<comment type="subcellular location">
    <subcellularLocation>
        <location evidence="6">Nucleus</location>
    </subcellularLocation>
    <subcellularLocation>
        <location evidence="6">Cytoplasm</location>
    </subcellularLocation>
    <subcellularLocation>
        <location evidence="2">Cytoplasm</location>
        <location evidence="2">Stress granule</location>
    </subcellularLocation>
    <subcellularLocation>
        <location evidence="2">Cytoplasm</location>
        <location evidence="2">P-body</location>
    </subcellularLocation>
    <text evidence="2">Co-localizes with PUM2, EIF2S1 and TIAL1 in the stress granules. Co-localizes with DCP1A in the P-body.</text>
</comment>
<comment type="alternative products">
    <event type="alternative splicing"/>
    <isoform>
        <id>P60323-1</id>
        <name>1</name>
        <sequence type="displayed"/>
    </isoform>
    <isoform>
        <id>P60323-2</id>
        <name>2</name>
        <sequence type="described" ref="VSP_038695"/>
    </isoform>
</comment>
<comment type="tissue specificity">
    <text evidence="6">Ovary, testis and brain (at protein level). In the ovaries, expressed during multiple stages of oogenesis, including primordial, primary, secondary and antral follicles with the highest expression in the oocytes. In the testis, expressed in germ cells, type A spermatogonia (SA), primary spermatocytes (S1), round spermatids (S3) and elongated spermatids.</text>
</comment>
<comment type="developmental stage">
    <text evidence="6">Fetal ovary and fetal testis (at protein level).</text>
</comment>
<comment type="domain">
    <text evidence="4">The Nanos-type zinc finger is composed of two C2HC motifs, each motif binding one molecule of zinc. It is essential for the translation repression activity of the protein.</text>
</comment>
<comment type="similarity">
    <text evidence="4">Belongs to the nanos family.</text>
</comment>
<organism>
    <name type="scientific">Homo sapiens</name>
    <name type="common">Human</name>
    <dbReference type="NCBI Taxonomy" id="9606"/>
    <lineage>
        <taxon>Eukaryota</taxon>
        <taxon>Metazoa</taxon>
        <taxon>Chordata</taxon>
        <taxon>Craniata</taxon>
        <taxon>Vertebrata</taxon>
        <taxon>Euteleostomi</taxon>
        <taxon>Mammalia</taxon>
        <taxon>Eutheria</taxon>
        <taxon>Euarchontoglires</taxon>
        <taxon>Primates</taxon>
        <taxon>Haplorrhini</taxon>
        <taxon>Catarrhini</taxon>
        <taxon>Hominidae</taxon>
        <taxon>Homo</taxon>
    </lineage>
</organism>
<sequence length="173" mass="18844">MGTFDLWTDYLGLAHLVRALSGKEGPETRLSPQPEPEPMLEPDQKRSLESSPAPERLCSFCKHNGESRAIYQSHVLKDEAGRVLCPILRDYVCPQCGATRERAHTRRFCPLTGQGYTSVYSHTTRNSAGKKLVRPDKAKTQDTGHRRGGGGGAGFRGAGKSEPSPSCSPSMST</sequence>
<keyword id="KW-0025">Alternative splicing</keyword>
<keyword id="KW-0963">Cytoplasm</keyword>
<keyword id="KW-0217">Developmental protein</keyword>
<keyword id="KW-0221">Differentiation</keyword>
<keyword id="KW-0479">Metal-binding</keyword>
<keyword id="KW-0539">Nucleus</keyword>
<keyword id="KW-0896">Oogenesis</keyword>
<keyword id="KW-1267">Proteomics identification</keyword>
<keyword id="KW-1185">Reference proteome</keyword>
<keyword id="KW-0694">RNA-binding</keyword>
<keyword id="KW-0744">Spermatogenesis</keyword>
<keyword id="KW-0810">Translation regulation</keyword>
<keyword id="KW-0862">Zinc</keyword>
<keyword id="KW-0863">Zinc-finger</keyword>
<name>NANO3_HUMAN</name>
<gene>
    <name type="primary">NANOS3</name>
    <name type="synonym">NOS3</name>
</gene>
<accession>P60323</accession>
<accession>Q495E5</accession>
<dbReference type="EMBL" id="AC020916">
    <property type="status" value="NOT_ANNOTATED_CDS"/>
    <property type="molecule type" value="Genomic_DNA"/>
</dbReference>
<dbReference type="EMBL" id="BC101209">
    <property type="protein sequence ID" value="AAI01210.1"/>
    <property type="molecule type" value="mRNA"/>
</dbReference>
<dbReference type="EMBL" id="BC101210">
    <property type="protein sequence ID" value="AAI01211.1"/>
    <property type="molecule type" value="mRNA"/>
</dbReference>
<dbReference type="EMBL" id="BM702754">
    <property type="status" value="NOT_ANNOTATED_CDS"/>
    <property type="molecule type" value="mRNA"/>
</dbReference>
<dbReference type="CCDS" id="CCDS42511.1">
    <molecule id="P60323-2"/>
</dbReference>
<dbReference type="RefSeq" id="NP_001092092.1">
    <molecule id="P60323-2"/>
    <property type="nucleotide sequence ID" value="NM_001098622.3"/>
</dbReference>
<dbReference type="SMR" id="P60323"/>
<dbReference type="BioGRID" id="131219">
    <property type="interactions" value="17"/>
</dbReference>
<dbReference type="ELM" id="P60323"/>
<dbReference type="FunCoup" id="P60323">
    <property type="interactions" value="876"/>
</dbReference>
<dbReference type="IntAct" id="P60323">
    <property type="interactions" value="5"/>
</dbReference>
<dbReference type="STRING" id="9606.ENSP00000341992"/>
<dbReference type="iPTMnet" id="P60323"/>
<dbReference type="PhosphoSitePlus" id="P60323"/>
<dbReference type="SwissPalm" id="P60323"/>
<dbReference type="BioMuta" id="NANOS3"/>
<dbReference type="MassIVE" id="P60323"/>
<dbReference type="PeptideAtlas" id="P60323"/>
<dbReference type="ProteomicsDB" id="57192">
    <molecule id="P60323-1"/>
</dbReference>
<dbReference type="ProteomicsDB" id="57193">
    <molecule id="P60323-2"/>
</dbReference>
<dbReference type="Antibodypedia" id="26509">
    <property type="antibodies" value="122 antibodies from 29 providers"/>
</dbReference>
<dbReference type="DNASU" id="342977"/>
<dbReference type="Ensembl" id="ENST00000339133.6">
    <molecule id="P60323-2"/>
    <property type="protein sequence ID" value="ENSP00000341992.4"/>
    <property type="gene ID" value="ENSG00000187556.8"/>
</dbReference>
<dbReference type="Ensembl" id="ENST00000397555.3">
    <molecule id="P60323-1"/>
    <property type="protein sequence ID" value="ENSP00000380687.2"/>
    <property type="gene ID" value="ENSG00000187556.8"/>
</dbReference>
<dbReference type="Ensembl" id="ENST00000672749.1">
    <molecule id="P60323-1"/>
    <property type="protein sequence ID" value="ENSP00000500080.1"/>
    <property type="gene ID" value="ENSG00000288505.1"/>
</dbReference>
<dbReference type="Ensembl" id="ENST00000673200.1">
    <molecule id="P60323-2"/>
    <property type="protein sequence ID" value="ENSP00000500242.1"/>
    <property type="gene ID" value="ENSG00000288505.1"/>
</dbReference>
<dbReference type="GeneID" id="342977"/>
<dbReference type="KEGG" id="hsa:342977"/>
<dbReference type="MANE-Select" id="ENST00000339133.6">
    <molecule id="P60323-2"/>
    <property type="protein sequence ID" value="ENSP00000341992.4"/>
    <property type="RefSeq nucleotide sequence ID" value="NM_001098622.3"/>
    <property type="RefSeq protein sequence ID" value="NP_001092092.1"/>
</dbReference>
<dbReference type="UCSC" id="uc002mxj.5">
    <molecule id="P60323-1"/>
    <property type="organism name" value="human"/>
</dbReference>
<dbReference type="AGR" id="HGNC:22048"/>
<dbReference type="CTD" id="342977"/>
<dbReference type="DisGeNET" id="342977"/>
<dbReference type="GeneCards" id="NANOS3"/>
<dbReference type="HGNC" id="HGNC:22048">
    <property type="gene designation" value="NANOS3"/>
</dbReference>
<dbReference type="HPA" id="ENSG00000187556">
    <property type="expression patterns" value="Group enriched (brain, testis)"/>
</dbReference>
<dbReference type="MalaCards" id="NANOS3"/>
<dbReference type="MIM" id="608229">
    <property type="type" value="gene"/>
</dbReference>
<dbReference type="neXtProt" id="NX_P60323"/>
<dbReference type="OpenTargets" id="ENSG00000187556"/>
<dbReference type="PharmGKB" id="PA134867615"/>
<dbReference type="VEuPathDB" id="HostDB:ENSG00000187556"/>
<dbReference type="eggNOG" id="KOG4602">
    <property type="taxonomic scope" value="Eukaryota"/>
</dbReference>
<dbReference type="GeneTree" id="ENSGT00950000183135"/>
<dbReference type="HOGENOM" id="CLU_094055_1_0_1"/>
<dbReference type="InParanoid" id="P60323"/>
<dbReference type="OMA" id="HCAFCKH"/>
<dbReference type="OrthoDB" id="5864971at2759"/>
<dbReference type="PAN-GO" id="P60323">
    <property type="GO annotations" value="4 GO annotations based on evolutionary models"/>
</dbReference>
<dbReference type="PhylomeDB" id="P60323"/>
<dbReference type="TreeFam" id="TF326882"/>
<dbReference type="PathwayCommons" id="P60323"/>
<dbReference type="Reactome" id="R-HSA-9827857">
    <property type="pathway name" value="Specification of primordial germ cells"/>
</dbReference>
<dbReference type="SignaLink" id="P60323"/>
<dbReference type="SIGNOR" id="P60323"/>
<dbReference type="BioGRID-ORCS" id="342977">
    <property type="hits" value="18 hits in 1140 CRISPR screens"/>
</dbReference>
<dbReference type="GenomeRNAi" id="342977"/>
<dbReference type="Pharos" id="P60323">
    <property type="development level" value="Tbio"/>
</dbReference>
<dbReference type="PRO" id="PR:P60323"/>
<dbReference type="Proteomes" id="UP000005640">
    <property type="component" value="Chromosome 19"/>
</dbReference>
<dbReference type="RNAct" id="P60323">
    <property type="molecule type" value="protein"/>
</dbReference>
<dbReference type="Bgee" id="ENSG00000187556">
    <property type="expression patterns" value="Expressed in primordial germ cell in gonad and 96 other cell types or tissues"/>
</dbReference>
<dbReference type="GO" id="GO:0005737">
    <property type="term" value="C:cytoplasm"/>
    <property type="evidence" value="ECO:0000314"/>
    <property type="project" value="UniProtKB"/>
</dbReference>
<dbReference type="GO" id="GO:0010494">
    <property type="term" value="C:cytoplasmic stress granule"/>
    <property type="evidence" value="ECO:0000250"/>
    <property type="project" value="UniProtKB"/>
</dbReference>
<dbReference type="GO" id="GO:0005829">
    <property type="term" value="C:cytosol"/>
    <property type="evidence" value="ECO:0000314"/>
    <property type="project" value="HPA"/>
</dbReference>
<dbReference type="GO" id="GO:0005654">
    <property type="term" value="C:nucleoplasm"/>
    <property type="evidence" value="ECO:0000314"/>
    <property type="project" value="HPA"/>
</dbReference>
<dbReference type="GO" id="GO:0005634">
    <property type="term" value="C:nucleus"/>
    <property type="evidence" value="ECO:0000314"/>
    <property type="project" value="UniProtKB"/>
</dbReference>
<dbReference type="GO" id="GO:0000932">
    <property type="term" value="C:P-body"/>
    <property type="evidence" value="ECO:0000250"/>
    <property type="project" value="UniProtKB"/>
</dbReference>
<dbReference type="GO" id="GO:0048471">
    <property type="term" value="C:perinuclear region of cytoplasm"/>
    <property type="evidence" value="ECO:0000314"/>
    <property type="project" value="UniProtKB"/>
</dbReference>
<dbReference type="GO" id="GO:0008047">
    <property type="term" value="F:enzyme activator activity"/>
    <property type="evidence" value="ECO:0000314"/>
    <property type="project" value="BHF-UCL"/>
</dbReference>
<dbReference type="GO" id="GO:0003729">
    <property type="term" value="F:mRNA binding"/>
    <property type="evidence" value="ECO:0000318"/>
    <property type="project" value="GO_Central"/>
</dbReference>
<dbReference type="GO" id="GO:0003723">
    <property type="term" value="F:RNA binding"/>
    <property type="evidence" value="ECO:0000250"/>
    <property type="project" value="UniProtKB"/>
</dbReference>
<dbReference type="GO" id="GO:0008270">
    <property type="term" value="F:zinc ion binding"/>
    <property type="evidence" value="ECO:0007669"/>
    <property type="project" value="UniProtKB-KW"/>
</dbReference>
<dbReference type="GO" id="GO:0097190">
    <property type="term" value="P:apoptotic signaling pathway"/>
    <property type="evidence" value="ECO:0007669"/>
    <property type="project" value="Ensembl"/>
</dbReference>
<dbReference type="GO" id="GO:0007281">
    <property type="term" value="P:germ cell development"/>
    <property type="evidence" value="ECO:0000315"/>
    <property type="project" value="UniProtKB"/>
</dbReference>
<dbReference type="GO" id="GO:0061157">
    <property type="term" value="P:mRNA destabilization"/>
    <property type="evidence" value="ECO:0000314"/>
    <property type="project" value="BHF-UCL"/>
</dbReference>
<dbReference type="GO" id="GO:2001234">
    <property type="term" value="P:negative regulation of apoptotic signaling pathway"/>
    <property type="evidence" value="ECO:0007669"/>
    <property type="project" value="Ensembl"/>
</dbReference>
<dbReference type="GO" id="GO:0017148">
    <property type="term" value="P:negative regulation of translation"/>
    <property type="evidence" value="ECO:0000314"/>
    <property type="project" value="BHF-UCL"/>
</dbReference>
<dbReference type="GO" id="GO:0048477">
    <property type="term" value="P:oogenesis"/>
    <property type="evidence" value="ECO:0000318"/>
    <property type="project" value="GO_Central"/>
</dbReference>
<dbReference type="GO" id="GO:0051726">
    <property type="term" value="P:regulation of cell cycle"/>
    <property type="evidence" value="ECO:0000250"/>
    <property type="project" value="UniProtKB"/>
</dbReference>
<dbReference type="GO" id="GO:0006417">
    <property type="term" value="P:regulation of translation"/>
    <property type="evidence" value="ECO:0000250"/>
    <property type="project" value="UniProtKB"/>
</dbReference>
<dbReference type="GO" id="GO:0007283">
    <property type="term" value="P:spermatogenesis"/>
    <property type="evidence" value="ECO:0000250"/>
    <property type="project" value="UniProtKB"/>
</dbReference>
<dbReference type="FunFam" id="4.10.60.30:FF:000001">
    <property type="entry name" value="nanos homolog 3"/>
    <property type="match status" value="1"/>
</dbReference>
<dbReference type="Gene3D" id="4.10.60.30">
    <property type="entry name" value="Nanos, RNA-binding domain"/>
    <property type="match status" value="1"/>
</dbReference>
<dbReference type="InterPro" id="IPR008705">
    <property type="entry name" value="Nanos/Xcar2"/>
</dbReference>
<dbReference type="InterPro" id="IPR038129">
    <property type="entry name" value="Nanos_sf"/>
</dbReference>
<dbReference type="InterPro" id="IPR024161">
    <property type="entry name" value="Znf_nanos-typ"/>
</dbReference>
<dbReference type="PANTHER" id="PTHR12887">
    <property type="entry name" value="NANOS PROTEIN"/>
    <property type="match status" value="1"/>
</dbReference>
<dbReference type="Pfam" id="PF05741">
    <property type="entry name" value="zf-nanos"/>
    <property type="match status" value="1"/>
</dbReference>
<dbReference type="PROSITE" id="PS51522">
    <property type="entry name" value="ZF_NANOS"/>
    <property type="match status" value="1"/>
</dbReference>
<evidence type="ECO:0000250" key="1"/>
<evidence type="ECO:0000250" key="2">
    <source>
        <dbReference type="UniProtKB" id="P60324"/>
    </source>
</evidence>
<evidence type="ECO:0000250" key="3">
    <source>
        <dbReference type="UniProtKB" id="Q90WW1"/>
    </source>
</evidence>
<evidence type="ECO:0000255" key="4">
    <source>
        <dbReference type="PROSITE-ProRule" id="PRU00855"/>
    </source>
</evidence>
<evidence type="ECO:0000256" key="5">
    <source>
        <dbReference type="SAM" id="MobiDB-lite"/>
    </source>
</evidence>
<evidence type="ECO:0000269" key="6">
    <source>
    </source>
</evidence>
<evidence type="ECO:0000303" key="7">
    <source>
    </source>
</evidence>
<feature type="chain" id="PRO_0000207689" description="Nanos homolog 3">
    <location>
        <begin position="1"/>
        <end position="173"/>
    </location>
</feature>
<feature type="zinc finger region" description="Nanos-type" evidence="4">
    <location>
        <begin position="57"/>
        <end position="111"/>
    </location>
</feature>
<feature type="region of interest" description="Disordered" evidence="5">
    <location>
        <begin position="23"/>
        <end position="51"/>
    </location>
</feature>
<feature type="region of interest" description="Disordered" evidence="5">
    <location>
        <begin position="123"/>
        <end position="173"/>
    </location>
</feature>
<feature type="short sequence motif" description="C2HC 1" evidence="4">
    <location>
        <begin position="58"/>
        <end position="85"/>
    </location>
</feature>
<feature type="short sequence motif" description="C2HC 2" evidence="4">
    <location>
        <begin position="93"/>
        <end position="109"/>
    </location>
</feature>
<feature type="compositionally biased region" description="Basic and acidic residues" evidence="5">
    <location>
        <begin position="133"/>
        <end position="145"/>
    </location>
</feature>
<feature type="compositionally biased region" description="Low complexity" evidence="5">
    <location>
        <begin position="161"/>
        <end position="173"/>
    </location>
</feature>
<feature type="binding site" evidence="4">
    <location>
        <position position="58"/>
    </location>
    <ligand>
        <name>Zn(2+)</name>
        <dbReference type="ChEBI" id="CHEBI:29105"/>
        <label>1</label>
    </ligand>
</feature>
<feature type="binding site" evidence="4">
    <location>
        <position position="61"/>
    </location>
    <ligand>
        <name>Zn(2+)</name>
        <dbReference type="ChEBI" id="CHEBI:29105"/>
        <label>1</label>
    </ligand>
</feature>
<feature type="binding site" evidence="4">
    <location>
        <position position="74"/>
    </location>
    <ligand>
        <name>Zn(2+)</name>
        <dbReference type="ChEBI" id="CHEBI:29105"/>
        <label>1</label>
    </ligand>
</feature>
<feature type="binding site" evidence="4">
    <location>
        <position position="85"/>
    </location>
    <ligand>
        <name>Zn(2+)</name>
        <dbReference type="ChEBI" id="CHEBI:29105"/>
        <label>1</label>
    </ligand>
</feature>
<feature type="binding site" evidence="4">
    <location>
        <position position="93"/>
    </location>
    <ligand>
        <name>Zn(2+)</name>
        <dbReference type="ChEBI" id="CHEBI:29105"/>
        <label>2</label>
    </ligand>
</feature>
<feature type="binding site" evidence="4">
    <location>
        <position position="96"/>
    </location>
    <ligand>
        <name>Zn(2+)</name>
        <dbReference type="ChEBI" id="CHEBI:29105"/>
        <label>2</label>
    </ligand>
</feature>
<feature type="binding site" evidence="4">
    <location>
        <position position="104"/>
    </location>
    <ligand>
        <name>Zn(2+)</name>
        <dbReference type="ChEBI" id="CHEBI:29105"/>
        <label>2</label>
    </ligand>
</feature>
<feature type="binding site" evidence="4">
    <location>
        <position position="109"/>
    </location>
    <ligand>
        <name>Zn(2+)</name>
        <dbReference type="ChEBI" id="CHEBI:29105"/>
        <label>2</label>
    </ligand>
</feature>
<feature type="site" description="Involved in RNA binding" evidence="3">
    <location>
        <position position="62"/>
    </location>
</feature>
<feature type="site" description="Involved in RNA binding" evidence="3">
    <location>
        <position position="77"/>
    </location>
</feature>
<feature type="site" description="Involved in RNA binding" evidence="3">
    <location>
        <position position="89"/>
    </location>
</feature>
<feature type="site" description="Involved in RNA binding" evidence="3">
    <location>
        <position position="107"/>
    </location>
</feature>
<feature type="splice variant" id="VSP_038695" description="In isoform 2." evidence="7">
    <original>P</original>
    <variation>PVSALEPMPAPESVPVPGPK</variation>
    <location>
        <position position="42"/>
    </location>
</feature>
<reference key="1">
    <citation type="journal article" date="2004" name="Nature">
        <title>The DNA sequence and biology of human chromosome 19.</title>
        <authorList>
            <person name="Grimwood J."/>
            <person name="Gordon L.A."/>
            <person name="Olsen A.S."/>
            <person name="Terry A."/>
            <person name="Schmutz J."/>
            <person name="Lamerdin J.E."/>
            <person name="Hellsten U."/>
            <person name="Goodstein D."/>
            <person name="Couronne O."/>
            <person name="Tran-Gyamfi M."/>
            <person name="Aerts A."/>
            <person name="Altherr M."/>
            <person name="Ashworth L."/>
            <person name="Bajorek E."/>
            <person name="Black S."/>
            <person name="Branscomb E."/>
            <person name="Caenepeel S."/>
            <person name="Carrano A.V."/>
            <person name="Caoile C."/>
            <person name="Chan Y.M."/>
            <person name="Christensen M."/>
            <person name="Cleland C.A."/>
            <person name="Copeland A."/>
            <person name="Dalin E."/>
            <person name="Dehal P."/>
            <person name="Denys M."/>
            <person name="Detter J.C."/>
            <person name="Escobar J."/>
            <person name="Flowers D."/>
            <person name="Fotopulos D."/>
            <person name="Garcia C."/>
            <person name="Georgescu A.M."/>
            <person name="Glavina T."/>
            <person name="Gomez M."/>
            <person name="Gonzales E."/>
            <person name="Groza M."/>
            <person name="Hammon N."/>
            <person name="Hawkins T."/>
            <person name="Haydu L."/>
            <person name="Ho I."/>
            <person name="Huang W."/>
            <person name="Israni S."/>
            <person name="Jett J."/>
            <person name="Kadner K."/>
            <person name="Kimball H."/>
            <person name="Kobayashi A."/>
            <person name="Larionov V."/>
            <person name="Leem S.-H."/>
            <person name="Lopez F."/>
            <person name="Lou Y."/>
            <person name="Lowry S."/>
            <person name="Malfatti S."/>
            <person name="Martinez D."/>
            <person name="McCready P.M."/>
            <person name="Medina C."/>
            <person name="Morgan J."/>
            <person name="Nelson K."/>
            <person name="Nolan M."/>
            <person name="Ovcharenko I."/>
            <person name="Pitluck S."/>
            <person name="Pollard M."/>
            <person name="Popkie A.P."/>
            <person name="Predki P."/>
            <person name="Quan G."/>
            <person name="Ramirez L."/>
            <person name="Rash S."/>
            <person name="Retterer J."/>
            <person name="Rodriguez A."/>
            <person name="Rogers S."/>
            <person name="Salamov A."/>
            <person name="Salazar A."/>
            <person name="She X."/>
            <person name="Smith D."/>
            <person name="Slezak T."/>
            <person name="Solovyev V."/>
            <person name="Thayer N."/>
            <person name="Tice H."/>
            <person name="Tsai M."/>
            <person name="Ustaszewska A."/>
            <person name="Vo N."/>
            <person name="Wagner M."/>
            <person name="Wheeler J."/>
            <person name="Wu K."/>
            <person name="Xie G."/>
            <person name="Yang J."/>
            <person name="Dubchak I."/>
            <person name="Furey T.S."/>
            <person name="DeJong P."/>
            <person name="Dickson M."/>
            <person name="Gordon D."/>
            <person name="Eichler E.E."/>
            <person name="Pennacchio L.A."/>
            <person name="Richardson P."/>
            <person name="Stubbs L."/>
            <person name="Rokhsar D.S."/>
            <person name="Myers R.M."/>
            <person name="Rubin E.M."/>
            <person name="Lucas S.M."/>
        </authorList>
    </citation>
    <scope>NUCLEOTIDE SEQUENCE [LARGE SCALE GENOMIC DNA]</scope>
</reference>
<reference key="2">
    <citation type="journal article" date="2004" name="Genome Res.">
        <title>The status, quality, and expansion of the NIH full-length cDNA project: the Mammalian Gene Collection (MGC).</title>
        <authorList>
            <consortium name="The MGC Project Team"/>
        </authorList>
    </citation>
    <scope>NUCLEOTIDE SEQUENCE [LARGE SCALE MRNA] (ISOFORM 2)</scope>
</reference>
<reference key="3">
    <citation type="journal article" date="1996" name="Genome Res.">
        <title>Normalization and subtraction: two approaches to facilitate gene discovery.</title>
        <authorList>
            <person name="Bonaldo M.F."/>
            <person name="Lennon G."/>
            <person name="Soares M.B."/>
        </authorList>
    </citation>
    <scope>NUCLEOTIDE SEQUENCE [LARGE SCALE MRNA] OF 122-173 (ISOFORMS 1/2)</scope>
</reference>
<reference key="4">
    <citation type="journal article" date="2011" name="Hum. Mol. Genet.">
        <title>NANOS3 function in human germ cell development.</title>
        <authorList>
            <person name="Julaton V.T."/>
            <person name="Reijo Pera R.A."/>
        </authorList>
    </citation>
    <scope>FUNCTION</scope>
    <scope>SUBCELLULAR LOCATION</scope>
    <scope>TISSUE SPECIFICITY</scope>
    <scope>DEVELOPMENTAL STAGE</scope>
</reference>
<protein>
    <recommendedName>
        <fullName>Nanos homolog 3</fullName>
        <shortName>NOS-3</shortName>
    </recommendedName>
</protein>